<reference key="1">
    <citation type="journal article" date="2008" name="J. Biotechnol.">
        <title>The genome of Xanthomonas campestris pv. campestris B100 and its use for the reconstruction of metabolic pathways involved in xanthan biosynthesis.</title>
        <authorList>
            <person name="Vorhoelter F.-J."/>
            <person name="Schneiker S."/>
            <person name="Goesmann A."/>
            <person name="Krause L."/>
            <person name="Bekel T."/>
            <person name="Kaiser O."/>
            <person name="Linke B."/>
            <person name="Patschkowski T."/>
            <person name="Rueckert C."/>
            <person name="Schmid J."/>
            <person name="Sidhu V.K."/>
            <person name="Sieber V."/>
            <person name="Tauch A."/>
            <person name="Watt S.A."/>
            <person name="Weisshaar B."/>
            <person name="Becker A."/>
            <person name="Niehaus K."/>
            <person name="Puehler A."/>
        </authorList>
    </citation>
    <scope>NUCLEOTIDE SEQUENCE [LARGE SCALE GENOMIC DNA]</scope>
    <source>
        <strain>B100</strain>
    </source>
</reference>
<proteinExistence type="inferred from homology"/>
<evidence type="ECO:0000255" key="1">
    <source>
        <dbReference type="HAMAP-Rule" id="MF_00061"/>
    </source>
</evidence>
<organism>
    <name type="scientific">Xanthomonas campestris pv. campestris (strain B100)</name>
    <dbReference type="NCBI Taxonomy" id="509169"/>
    <lineage>
        <taxon>Bacteria</taxon>
        <taxon>Pseudomonadati</taxon>
        <taxon>Pseudomonadota</taxon>
        <taxon>Gammaproteobacteria</taxon>
        <taxon>Lysobacterales</taxon>
        <taxon>Lysobacteraceae</taxon>
        <taxon>Xanthomonas</taxon>
    </lineage>
</organism>
<gene>
    <name evidence="1" type="primary">ispE</name>
    <name type="ordered locus">xcc-b100_3478</name>
</gene>
<accession>B0RUA1</accession>
<protein>
    <recommendedName>
        <fullName evidence="1">4-diphosphocytidyl-2-C-methyl-D-erythritol kinase</fullName>
        <shortName evidence="1">CMK</shortName>
        <ecNumber evidence="1">2.7.1.148</ecNumber>
    </recommendedName>
    <alternativeName>
        <fullName evidence="1">4-(cytidine-5'-diphospho)-2-C-methyl-D-erythritol kinase</fullName>
    </alternativeName>
</protein>
<keyword id="KW-0067">ATP-binding</keyword>
<keyword id="KW-0414">Isoprene biosynthesis</keyword>
<keyword id="KW-0418">Kinase</keyword>
<keyword id="KW-0547">Nucleotide-binding</keyword>
<keyword id="KW-0808">Transferase</keyword>
<feature type="chain" id="PRO_1000092125" description="4-diphosphocytidyl-2-C-methyl-D-erythritol kinase">
    <location>
        <begin position="1"/>
        <end position="295"/>
    </location>
</feature>
<feature type="active site" evidence="1">
    <location>
        <position position="22"/>
    </location>
</feature>
<feature type="active site" evidence="1">
    <location>
        <position position="148"/>
    </location>
</feature>
<feature type="binding site" evidence="1">
    <location>
        <begin position="106"/>
        <end position="116"/>
    </location>
    <ligand>
        <name>ATP</name>
        <dbReference type="ChEBI" id="CHEBI:30616"/>
    </ligand>
</feature>
<sequence>MDALALMSASNPAWSAWPAPAKLNLFLQIVGRRADGYHLLQTVFRLLDWGDTVHVRLRTDGQIQRIGASLPGVAEDDDLMVRAARALQIHAGTALGAELRVDKRIPAGGGFGGGSSDAATVLVALNALWGLGLPVDTLAELGLRLGADVPVFVRGHNAWAEGVGEKLTPISLPQAAYVLVDPGIHVPTPVLFQSQELTRDAAPAKIADFASGSLLDNAFEPVLRRREPAIEAVFQALSRIGTPRLTGSGSGCFVEFATRAAAEQAMAHLPGNLRAWVVEGAAHSPLLDALDAIQV</sequence>
<comment type="function">
    <text evidence="1">Catalyzes the phosphorylation of the position 2 hydroxy group of 4-diphosphocytidyl-2C-methyl-D-erythritol.</text>
</comment>
<comment type="catalytic activity">
    <reaction evidence="1">
        <text>4-CDP-2-C-methyl-D-erythritol + ATP = 4-CDP-2-C-methyl-D-erythritol 2-phosphate + ADP + H(+)</text>
        <dbReference type="Rhea" id="RHEA:18437"/>
        <dbReference type="ChEBI" id="CHEBI:15378"/>
        <dbReference type="ChEBI" id="CHEBI:30616"/>
        <dbReference type="ChEBI" id="CHEBI:57823"/>
        <dbReference type="ChEBI" id="CHEBI:57919"/>
        <dbReference type="ChEBI" id="CHEBI:456216"/>
        <dbReference type="EC" id="2.7.1.148"/>
    </reaction>
</comment>
<comment type="pathway">
    <text evidence="1">Isoprenoid biosynthesis; isopentenyl diphosphate biosynthesis via DXP pathway; isopentenyl diphosphate from 1-deoxy-D-xylulose 5-phosphate: step 3/6.</text>
</comment>
<comment type="similarity">
    <text evidence="1">Belongs to the GHMP kinase family. IspE subfamily.</text>
</comment>
<name>ISPE_XANCB</name>
<dbReference type="EC" id="2.7.1.148" evidence="1"/>
<dbReference type="EMBL" id="AM920689">
    <property type="protein sequence ID" value="CAP52843.1"/>
    <property type="molecule type" value="Genomic_DNA"/>
</dbReference>
<dbReference type="SMR" id="B0RUA1"/>
<dbReference type="KEGG" id="xca:xcc-b100_3478"/>
<dbReference type="HOGENOM" id="CLU_053057_3_0_6"/>
<dbReference type="UniPathway" id="UPA00056">
    <property type="reaction ID" value="UER00094"/>
</dbReference>
<dbReference type="Proteomes" id="UP000001188">
    <property type="component" value="Chromosome"/>
</dbReference>
<dbReference type="GO" id="GO:0050515">
    <property type="term" value="F:4-(cytidine 5'-diphospho)-2-C-methyl-D-erythritol kinase activity"/>
    <property type="evidence" value="ECO:0007669"/>
    <property type="project" value="UniProtKB-UniRule"/>
</dbReference>
<dbReference type="GO" id="GO:0005524">
    <property type="term" value="F:ATP binding"/>
    <property type="evidence" value="ECO:0007669"/>
    <property type="project" value="UniProtKB-UniRule"/>
</dbReference>
<dbReference type="GO" id="GO:0019288">
    <property type="term" value="P:isopentenyl diphosphate biosynthetic process, methylerythritol 4-phosphate pathway"/>
    <property type="evidence" value="ECO:0007669"/>
    <property type="project" value="UniProtKB-UniRule"/>
</dbReference>
<dbReference type="GO" id="GO:0016114">
    <property type="term" value="P:terpenoid biosynthetic process"/>
    <property type="evidence" value="ECO:0007669"/>
    <property type="project" value="InterPro"/>
</dbReference>
<dbReference type="FunFam" id="3.30.230.10:FF:000022">
    <property type="entry name" value="4-diphosphocytidyl-2-C-methyl-D-erythritol kinase"/>
    <property type="match status" value="1"/>
</dbReference>
<dbReference type="FunFam" id="3.30.70.890:FF:000014">
    <property type="entry name" value="4-diphosphocytidyl-2-C-methyl-D-erythritol kinase"/>
    <property type="match status" value="1"/>
</dbReference>
<dbReference type="Gene3D" id="3.30.230.10">
    <property type="match status" value="1"/>
</dbReference>
<dbReference type="Gene3D" id="3.30.70.890">
    <property type="entry name" value="GHMP kinase, C-terminal domain"/>
    <property type="match status" value="1"/>
</dbReference>
<dbReference type="HAMAP" id="MF_00061">
    <property type="entry name" value="IspE"/>
    <property type="match status" value="1"/>
</dbReference>
<dbReference type="InterPro" id="IPR013750">
    <property type="entry name" value="GHMP_kinase_C_dom"/>
</dbReference>
<dbReference type="InterPro" id="IPR036554">
    <property type="entry name" value="GHMP_kinase_C_sf"/>
</dbReference>
<dbReference type="InterPro" id="IPR006204">
    <property type="entry name" value="GHMP_kinase_N_dom"/>
</dbReference>
<dbReference type="InterPro" id="IPR004424">
    <property type="entry name" value="IspE"/>
</dbReference>
<dbReference type="InterPro" id="IPR020568">
    <property type="entry name" value="Ribosomal_Su5_D2-typ_SF"/>
</dbReference>
<dbReference type="InterPro" id="IPR014721">
    <property type="entry name" value="Ribsml_uS5_D2-typ_fold_subgr"/>
</dbReference>
<dbReference type="NCBIfam" id="TIGR00154">
    <property type="entry name" value="ispE"/>
    <property type="match status" value="1"/>
</dbReference>
<dbReference type="PANTHER" id="PTHR43527">
    <property type="entry name" value="4-DIPHOSPHOCYTIDYL-2-C-METHYL-D-ERYTHRITOL KINASE, CHLOROPLASTIC"/>
    <property type="match status" value="1"/>
</dbReference>
<dbReference type="PANTHER" id="PTHR43527:SF2">
    <property type="entry name" value="4-DIPHOSPHOCYTIDYL-2-C-METHYL-D-ERYTHRITOL KINASE, CHLOROPLASTIC"/>
    <property type="match status" value="1"/>
</dbReference>
<dbReference type="Pfam" id="PF08544">
    <property type="entry name" value="GHMP_kinases_C"/>
    <property type="match status" value="1"/>
</dbReference>
<dbReference type="Pfam" id="PF00288">
    <property type="entry name" value="GHMP_kinases_N"/>
    <property type="match status" value="1"/>
</dbReference>
<dbReference type="PIRSF" id="PIRSF010376">
    <property type="entry name" value="IspE"/>
    <property type="match status" value="1"/>
</dbReference>
<dbReference type="SUPFAM" id="SSF55060">
    <property type="entry name" value="GHMP Kinase, C-terminal domain"/>
    <property type="match status" value="1"/>
</dbReference>
<dbReference type="SUPFAM" id="SSF54211">
    <property type="entry name" value="Ribosomal protein S5 domain 2-like"/>
    <property type="match status" value="1"/>
</dbReference>